<organism>
    <name type="scientific">Saccharomyces cerevisiae (strain ATCC 204508 / S288c)</name>
    <name type="common">Baker's yeast</name>
    <dbReference type="NCBI Taxonomy" id="559292"/>
    <lineage>
        <taxon>Eukaryota</taxon>
        <taxon>Fungi</taxon>
        <taxon>Dikarya</taxon>
        <taxon>Ascomycota</taxon>
        <taxon>Saccharomycotina</taxon>
        <taxon>Saccharomycetes</taxon>
        <taxon>Saccharomycetales</taxon>
        <taxon>Saccharomycetaceae</taxon>
        <taxon>Saccharomyces</taxon>
    </lineage>
</organism>
<accession>P87191</accession>
<feature type="chain" id="PRO_0000299914" description="Putative uncharacterized protein YER119C-A">
    <location>
        <begin position="1"/>
        <end position="123"/>
    </location>
</feature>
<feature type="region of interest" description="Disordered" evidence="1">
    <location>
        <begin position="76"/>
        <end position="97"/>
    </location>
</feature>
<protein>
    <recommendedName>
        <fullName>Putative uncharacterized protein YER119C-A</fullName>
    </recommendedName>
</protein>
<gene>
    <name type="ordered locus">YER119C-A</name>
</gene>
<sequence>MVWSELLEILAYSVDCSVNGDLYTNTSGEISTADILRFAEIVEYPSATLLTQNVRQTTPHNKQCTLLLKPFYSPCENNKRKKKSEGERVRSPRTFRGSESLSIQQLEVYRTTMVERRVSFTAQ</sequence>
<comment type="miscellaneous">
    <text evidence="2">Partially overlaps SCS2.</text>
</comment>
<comment type="caution">
    <text evidence="3">Product of a dubious gene prediction unlikely to encode a functional protein. Because of that it is not part of the S.cerevisiae S288c complete/reference proteome set.</text>
</comment>
<dbReference type="EMBL" id="U18916">
    <property type="protein sequence ID" value="AAC03236.1"/>
    <property type="molecule type" value="Genomic_DNA"/>
</dbReference>
<dbReference type="PIR" id="S53548">
    <property type="entry name" value="S53548"/>
</dbReference>
<dbReference type="iPTMnet" id="P87191"/>
<dbReference type="PaxDb" id="4932-YER119C-A"/>
<dbReference type="EnsemblFungi" id="YER119C-A_mRNA">
    <property type="protein sequence ID" value="YER119C-A"/>
    <property type="gene ID" value="YER119C-A"/>
</dbReference>
<dbReference type="AGR" id="SGD:S000002961"/>
<dbReference type="SGD" id="S000002961">
    <property type="gene designation" value="YER119C-A"/>
</dbReference>
<dbReference type="HOGENOM" id="CLU_2017008_0_0_1"/>
<proteinExistence type="uncertain"/>
<evidence type="ECO:0000256" key="1">
    <source>
        <dbReference type="SAM" id="MobiDB-lite"/>
    </source>
</evidence>
<evidence type="ECO:0000305" key="2"/>
<evidence type="ECO:0000305" key="3">
    <source>
    </source>
</evidence>
<name>YE119_YEAST</name>
<reference key="1">
    <citation type="journal article" date="1997" name="Nature">
        <title>The nucleotide sequence of Saccharomyces cerevisiae chromosome V.</title>
        <authorList>
            <person name="Dietrich F.S."/>
            <person name="Mulligan J.T."/>
            <person name="Hennessy K.M."/>
            <person name="Yelton M.A."/>
            <person name="Allen E."/>
            <person name="Araujo R."/>
            <person name="Aviles E."/>
            <person name="Berno A."/>
            <person name="Brennan T."/>
            <person name="Carpenter J."/>
            <person name="Chen E."/>
            <person name="Cherry J.M."/>
            <person name="Chung E."/>
            <person name="Duncan M."/>
            <person name="Guzman E."/>
            <person name="Hartzell G."/>
            <person name="Hunicke-Smith S."/>
            <person name="Hyman R.W."/>
            <person name="Kayser A."/>
            <person name="Komp C."/>
            <person name="Lashkari D."/>
            <person name="Lew H."/>
            <person name="Lin D."/>
            <person name="Mosedale D."/>
            <person name="Nakahara K."/>
            <person name="Namath A."/>
            <person name="Norgren R."/>
            <person name="Oefner P."/>
            <person name="Oh C."/>
            <person name="Petel F.X."/>
            <person name="Roberts D."/>
            <person name="Sehl P."/>
            <person name="Schramm S."/>
            <person name="Shogren T."/>
            <person name="Smith V."/>
            <person name="Taylor P."/>
            <person name="Wei Y."/>
            <person name="Botstein D."/>
            <person name="Davis R.W."/>
        </authorList>
    </citation>
    <scope>NUCLEOTIDE SEQUENCE [LARGE SCALE GENOMIC DNA]</scope>
    <source>
        <strain>ATCC 204508 / S288c</strain>
    </source>
</reference>
<reference key="2">
    <citation type="journal article" date="2014" name="G3 (Bethesda)">
        <title>The reference genome sequence of Saccharomyces cerevisiae: Then and now.</title>
        <authorList>
            <person name="Engel S.R."/>
            <person name="Dietrich F.S."/>
            <person name="Fisk D.G."/>
            <person name="Binkley G."/>
            <person name="Balakrishnan R."/>
            <person name="Costanzo M.C."/>
            <person name="Dwight S.S."/>
            <person name="Hitz B.C."/>
            <person name="Karra K."/>
            <person name="Nash R.S."/>
            <person name="Weng S."/>
            <person name="Wong E.D."/>
            <person name="Lloyd P."/>
            <person name="Skrzypek M.S."/>
            <person name="Miyasato S.R."/>
            <person name="Simison M."/>
            <person name="Cherry J.M."/>
        </authorList>
    </citation>
    <scope>GENOME REANNOTATION</scope>
    <source>
        <strain>ATCC 204508 / S288c</strain>
    </source>
</reference>